<feature type="chain" id="PRO_0000391860" description="DDRGK domain-containing protein 1">
    <location>
        <begin position="1"/>
        <end position="309"/>
    </location>
</feature>
<feature type="topological domain" description="Lumenal" evidence="5">
    <location>
        <begin position="1"/>
        <end position="2"/>
    </location>
</feature>
<feature type="transmembrane region" description="Helical" evidence="2">
    <location>
        <begin position="3"/>
        <end position="23"/>
    </location>
</feature>
<feature type="topological domain" description="Cytoplasmic" evidence="5">
    <location>
        <begin position="24"/>
        <end position="309"/>
    </location>
</feature>
<feature type="region of interest" description="Disordered" evidence="3">
    <location>
        <begin position="32"/>
        <end position="53"/>
    </location>
</feature>
<feature type="region of interest" description="Disordered" evidence="3">
    <location>
        <begin position="79"/>
        <end position="175"/>
    </location>
</feature>
<feature type="coiled-coil region" evidence="2">
    <location>
        <begin position="120"/>
        <end position="177"/>
    </location>
</feature>
<feature type="compositionally biased region" description="Acidic residues" evidence="3">
    <location>
        <begin position="87"/>
        <end position="96"/>
    </location>
</feature>
<feature type="compositionally biased region" description="Basic and acidic residues" evidence="3">
    <location>
        <begin position="107"/>
        <end position="175"/>
    </location>
</feature>
<keyword id="KW-0175">Coiled coil</keyword>
<keyword id="KW-0256">Endoplasmic reticulum</keyword>
<keyword id="KW-0472">Membrane</keyword>
<keyword id="KW-0523">Neurodegeneration</keyword>
<keyword id="KW-1185">Reference proteome</keyword>
<keyword id="KW-0812">Transmembrane</keyword>
<keyword id="KW-1133">Transmembrane helix</keyword>
<keyword id="KW-0833">Ubl conjugation pathway</keyword>
<comment type="function">
    <text evidence="1 4">Substrate adapter for ufmylation, the covalent attachment of the ubiquitin-like modifier UFM1 to substrate proteins (By similarity). Required for ufmylation of Atg9; protects the nervous system during aging, possibly by stabilizing Atg9 and supporting its function (PubMed:37086384).</text>
</comment>
<comment type="subunit">
    <text evidence="4">Interacts with Atg9; the interaction is transient.</text>
</comment>
<comment type="interaction">
    <interactant intactId="EBI-148976">
        <id>Q9VDD1</id>
    </interactant>
    <interactant intactId="EBI-172922">
        <id>Q9VI55</id>
        <label>Ufl1</label>
    </interactant>
    <organismsDiffer>false</organismsDiffer>
    <experiments>5</experiments>
</comment>
<comment type="subcellular location">
    <subcellularLocation>
        <location evidence="1">Endoplasmic reticulum membrane</location>
        <topology evidence="2">Single-pass membrane protein</topology>
    </subcellularLocation>
</comment>
<comment type="developmental stage">
    <text evidence="4">Expression in the adult brain declines with age (at protein level).</text>
</comment>
<comment type="disruption phenotype">
    <text evidence="4">RNAi-mediated knockdown in adult neuronal tissue results in reduced adult lifespan and progressive locomoter defects due to neurodegeneration (PubMed:37086384). Neuronal cells in these adults display defects in autophagy (PubMed:37086384).</text>
</comment>
<comment type="similarity">
    <text evidence="5">Belongs to the DDRGK1 family.</text>
</comment>
<gene>
    <name evidence="6" type="primary">Ddrgk1</name>
    <name evidence="6" type="ORF">CG5862</name>
</gene>
<reference key="1">
    <citation type="journal article" date="2000" name="Science">
        <title>The genome sequence of Drosophila melanogaster.</title>
        <authorList>
            <person name="Adams M.D."/>
            <person name="Celniker S.E."/>
            <person name="Holt R.A."/>
            <person name="Evans C.A."/>
            <person name="Gocayne J.D."/>
            <person name="Amanatides P.G."/>
            <person name="Scherer S.E."/>
            <person name="Li P.W."/>
            <person name="Hoskins R.A."/>
            <person name="Galle R.F."/>
            <person name="George R.A."/>
            <person name="Lewis S.E."/>
            <person name="Richards S."/>
            <person name="Ashburner M."/>
            <person name="Henderson S.N."/>
            <person name="Sutton G.G."/>
            <person name="Wortman J.R."/>
            <person name="Yandell M.D."/>
            <person name="Zhang Q."/>
            <person name="Chen L.X."/>
            <person name="Brandon R.C."/>
            <person name="Rogers Y.-H.C."/>
            <person name="Blazej R.G."/>
            <person name="Champe M."/>
            <person name="Pfeiffer B.D."/>
            <person name="Wan K.H."/>
            <person name="Doyle C."/>
            <person name="Baxter E.G."/>
            <person name="Helt G."/>
            <person name="Nelson C.R."/>
            <person name="Miklos G.L.G."/>
            <person name="Abril J.F."/>
            <person name="Agbayani A."/>
            <person name="An H.-J."/>
            <person name="Andrews-Pfannkoch C."/>
            <person name="Baldwin D."/>
            <person name="Ballew R.M."/>
            <person name="Basu A."/>
            <person name="Baxendale J."/>
            <person name="Bayraktaroglu L."/>
            <person name="Beasley E.M."/>
            <person name="Beeson K.Y."/>
            <person name="Benos P.V."/>
            <person name="Berman B.P."/>
            <person name="Bhandari D."/>
            <person name="Bolshakov S."/>
            <person name="Borkova D."/>
            <person name="Botchan M.R."/>
            <person name="Bouck J."/>
            <person name="Brokstein P."/>
            <person name="Brottier P."/>
            <person name="Burtis K.C."/>
            <person name="Busam D.A."/>
            <person name="Butler H."/>
            <person name="Cadieu E."/>
            <person name="Center A."/>
            <person name="Chandra I."/>
            <person name="Cherry J.M."/>
            <person name="Cawley S."/>
            <person name="Dahlke C."/>
            <person name="Davenport L.B."/>
            <person name="Davies P."/>
            <person name="de Pablos B."/>
            <person name="Delcher A."/>
            <person name="Deng Z."/>
            <person name="Mays A.D."/>
            <person name="Dew I."/>
            <person name="Dietz S.M."/>
            <person name="Dodson K."/>
            <person name="Doup L.E."/>
            <person name="Downes M."/>
            <person name="Dugan-Rocha S."/>
            <person name="Dunkov B.C."/>
            <person name="Dunn P."/>
            <person name="Durbin K.J."/>
            <person name="Evangelista C.C."/>
            <person name="Ferraz C."/>
            <person name="Ferriera S."/>
            <person name="Fleischmann W."/>
            <person name="Fosler C."/>
            <person name="Gabrielian A.E."/>
            <person name="Garg N.S."/>
            <person name="Gelbart W.M."/>
            <person name="Glasser K."/>
            <person name="Glodek A."/>
            <person name="Gong F."/>
            <person name="Gorrell J.H."/>
            <person name="Gu Z."/>
            <person name="Guan P."/>
            <person name="Harris M."/>
            <person name="Harris N.L."/>
            <person name="Harvey D.A."/>
            <person name="Heiman T.J."/>
            <person name="Hernandez J.R."/>
            <person name="Houck J."/>
            <person name="Hostin D."/>
            <person name="Houston K.A."/>
            <person name="Howland T.J."/>
            <person name="Wei M.-H."/>
            <person name="Ibegwam C."/>
            <person name="Jalali M."/>
            <person name="Kalush F."/>
            <person name="Karpen G.H."/>
            <person name="Ke Z."/>
            <person name="Kennison J.A."/>
            <person name="Ketchum K.A."/>
            <person name="Kimmel B.E."/>
            <person name="Kodira C.D."/>
            <person name="Kraft C.L."/>
            <person name="Kravitz S."/>
            <person name="Kulp D."/>
            <person name="Lai Z."/>
            <person name="Lasko P."/>
            <person name="Lei Y."/>
            <person name="Levitsky A.A."/>
            <person name="Li J.H."/>
            <person name="Li Z."/>
            <person name="Liang Y."/>
            <person name="Lin X."/>
            <person name="Liu X."/>
            <person name="Mattei B."/>
            <person name="McIntosh T.C."/>
            <person name="McLeod M.P."/>
            <person name="McPherson D."/>
            <person name="Merkulov G."/>
            <person name="Milshina N.V."/>
            <person name="Mobarry C."/>
            <person name="Morris J."/>
            <person name="Moshrefi A."/>
            <person name="Mount S.M."/>
            <person name="Moy M."/>
            <person name="Murphy B."/>
            <person name="Murphy L."/>
            <person name="Muzny D.M."/>
            <person name="Nelson D.L."/>
            <person name="Nelson D.R."/>
            <person name="Nelson K.A."/>
            <person name="Nixon K."/>
            <person name="Nusskern D.R."/>
            <person name="Pacleb J.M."/>
            <person name="Palazzolo M."/>
            <person name="Pittman G.S."/>
            <person name="Pan S."/>
            <person name="Pollard J."/>
            <person name="Puri V."/>
            <person name="Reese M.G."/>
            <person name="Reinert K."/>
            <person name="Remington K."/>
            <person name="Saunders R.D.C."/>
            <person name="Scheeler F."/>
            <person name="Shen H."/>
            <person name="Shue B.C."/>
            <person name="Siden-Kiamos I."/>
            <person name="Simpson M."/>
            <person name="Skupski M.P."/>
            <person name="Smith T.J."/>
            <person name="Spier E."/>
            <person name="Spradling A.C."/>
            <person name="Stapleton M."/>
            <person name="Strong R."/>
            <person name="Sun E."/>
            <person name="Svirskas R."/>
            <person name="Tector C."/>
            <person name="Turner R."/>
            <person name="Venter E."/>
            <person name="Wang A.H."/>
            <person name="Wang X."/>
            <person name="Wang Z.-Y."/>
            <person name="Wassarman D.A."/>
            <person name="Weinstock G.M."/>
            <person name="Weissenbach J."/>
            <person name="Williams S.M."/>
            <person name="Woodage T."/>
            <person name="Worley K.C."/>
            <person name="Wu D."/>
            <person name="Yang S."/>
            <person name="Yao Q.A."/>
            <person name="Ye J."/>
            <person name="Yeh R.-F."/>
            <person name="Zaveri J.S."/>
            <person name="Zhan M."/>
            <person name="Zhang G."/>
            <person name="Zhao Q."/>
            <person name="Zheng L."/>
            <person name="Zheng X.H."/>
            <person name="Zhong F.N."/>
            <person name="Zhong W."/>
            <person name="Zhou X."/>
            <person name="Zhu S.C."/>
            <person name="Zhu X."/>
            <person name="Smith H.O."/>
            <person name="Gibbs R.A."/>
            <person name="Myers E.W."/>
            <person name="Rubin G.M."/>
            <person name="Venter J.C."/>
        </authorList>
    </citation>
    <scope>NUCLEOTIDE SEQUENCE [LARGE SCALE GENOMIC DNA]</scope>
    <source>
        <strain>Berkeley</strain>
    </source>
</reference>
<reference key="2">
    <citation type="journal article" date="2002" name="Genome Biol.">
        <title>Annotation of the Drosophila melanogaster euchromatic genome: a systematic review.</title>
        <authorList>
            <person name="Misra S."/>
            <person name="Crosby M.A."/>
            <person name="Mungall C.J."/>
            <person name="Matthews B.B."/>
            <person name="Campbell K.S."/>
            <person name="Hradecky P."/>
            <person name="Huang Y."/>
            <person name="Kaminker J.S."/>
            <person name="Millburn G.H."/>
            <person name="Prochnik S.E."/>
            <person name="Smith C.D."/>
            <person name="Tupy J.L."/>
            <person name="Whitfield E.J."/>
            <person name="Bayraktaroglu L."/>
            <person name="Berman B.P."/>
            <person name="Bettencourt B.R."/>
            <person name="Celniker S.E."/>
            <person name="de Grey A.D.N.J."/>
            <person name="Drysdale R.A."/>
            <person name="Harris N.L."/>
            <person name="Richter J."/>
            <person name="Russo S."/>
            <person name="Schroeder A.J."/>
            <person name="Shu S.Q."/>
            <person name="Stapleton M."/>
            <person name="Yamada C."/>
            <person name="Ashburner M."/>
            <person name="Gelbart W.M."/>
            <person name="Rubin G.M."/>
            <person name="Lewis S.E."/>
        </authorList>
    </citation>
    <scope>GENOME REANNOTATION</scope>
    <source>
        <strain>Berkeley</strain>
    </source>
</reference>
<reference key="3">
    <citation type="journal article" date="2002" name="Genome Biol.">
        <title>A Drosophila full-length cDNA resource.</title>
        <authorList>
            <person name="Stapleton M."/>
            <person name="Carlson J.W."/>
            <person name="Brokstein P."/>
            <person name="Yu C."/>
            <person name="Champe M."/>
            <person name="George R.A."/>
            <person name="Guarin H."/>
            <person name="Kronmiller B."/>
            <person name="Pacleb J.M."/>
            <person name="Park S."/>
            <person name="Wan K.H."/>
            <person name="Rubin G.M."/>
            <person name="Celniker S.E."/>
        </authorList>
    </citation>
    <scope>NUCLEOTIDE SEQUENCE [LARGE SCALE MRNA]</scope>
    <source>
        <strain>Berkeley</strain>
        <tissue>Head</tissue>
    </source>
</reference>
<reference key="4">
    <citation type="journal article" date="2023" name="Cell. Mol. Life Sci.">
        <title>A neuroprotective role of Ufmylation through Atg9 in the aging brain of Drosophila.</title>
        <authorList>
            <person name="Li H."/>
            <person name="Yu Z."/>
            <person name="Niu Z."/>
            <person name="Cheng Y."/>
            <person name="Wei Z."/>
            <person name="Cai Y."/>
            <person name="Ma F."/>
            <person name="Hu L."/>
            <person name="Zhu J."/>
            <person name="Zhang W."/>
        </authorList>
    </citation>
    <scope>FUNCTION</scope>
    <scope>INTERACTION WITH ATG9</scope>
    <scope>DEVELOPMENTAL STAGE</scope>
    <scope>DISRUPTION PHENOTYPE</scope>
</reference>
<dbReference type="EMBL" id="AE014297">
    <property type="protein sequence ID" value="AAF55865.1"/>
    <property type="molecule type" value="Genomic_DNA"/>
</dbReference>
<dbReference type="EMBL" id="AY060740">
    <property type="protein sequence ID" value="AAL28288.1"/>
    <property type="molecule type" value="mRNA"/>
</dbReference>
<dbReference type="RefSeq" id="NP_650954.1">
    <property type="nucleotide sequence ID" value="NM_142697.4"/>
</dbReference>
<dbReference type="SMR" id="Q9VDD1"/>
<dbReference type="BioGRID" id="67486">
    <property type="interactions" value="7"/>
</dbReference>
<dbReference type="FunCoup" id="Q9VDD1">
    <property type="interactions" value="588"/>
</dbReference>
<dbReference type="IntAct" id="Q9VDD1">
    <property type="interactions" value="6"/>
</dbReference>
<dbReference type="STRING" id="7227.FBpp0083451"/>
<dbReference type="PaxDb" id="7227-FBpp0083451"/>
<dbReference type="DNASU" id="42516"/>
<dbReference type="EnsemblMetazoa" id="FBtr0084049">
    <property type="protein sequence ID" value="FBpp0083451"/>
    <property type="gene ID" value="FBgn0038868"/>
</dbReference>
<dbReference type="GeneID" id="42516"/>
<dbReference type="KEGG" id="dme:Dmel_CG5862"/>
<dbReference type="UCSC" id="CG5862-RA">
    <property type="organism name" value="d. melanogaster"/>
</dbReference>
<dbReference type="AGR" id="FB:FBgn0038868"/>
<dbReference type="CTD" id="65992"/>
<dbReference type="FlyBase" id="FBgn0038868">
    <property type="gene designation" value="Ddrgk1"/>
</dbReference>
<dbReference type="VEuPathDB" id="VectorBase:FBgn0038868"/>
<dbReference type="eggNOG" id="KOG3054">
    <property type="taxonomic scope" value="Eukaryota"/>
</dbReference>
<dbReference type="GeneTree" id="ENSGT00390000017193"/>
<dbReference type="HOGENOM" id="CLU_059562_1_0_1"/>
<dbReference type="InParanoid" id="Q9VDD1"/>
<dbReference type="OMA" id="EFTRECN"/>
<dbReference type="OrthoDB" id="2285710at2759"/>
<dbReference type="PhylomeDB" id="Q9VDD1"/>
<dbReference type="BioGRID-ORCS" id="42516">
    <property type="hits" value="0 hits in 1 CRISPR screen"/>
</dbReference>
<dbReference type="GenomeRNAi" id="42516"/>
<dbReference type="PRO" id="PR:Q9VDD1"/>
<dbReference type="Proteomes" id="UP000000803">
    <property type="component" value="Chromosome 3R"/>
</dbReference>
<dbReference type="Bgee" id="FBgn0038868">
    <property type="expression patterns" value="Expressed in spermatocyte in testis and 131 other cell types or tissues"/>
</dbReference>
<dbReference type="GO" id="GO:0098554">
    <property type="term" value="C:cytoplasmic side of endoplasmic reticulum membrane"/>
    <property type="evidence" value="ECO:0000304"/>
    <property type="project" value="FlyBase"/>
</dbReference>
<dbReference type="GO" id="GO:0005783">
    <property type="term" value="C:endoplasmic reticulum"/>
    <property type="evidence" value="ECO:0000250"/>
    <property type="project" value="FlyBase"/>
</dbReference>
<dbReference type="GO" id="GO:0030674">
    <property type="term" value="F:protein-macromolecule adaptor activity"/>
    <property type="evidence" value="ECO:0000304"/>
    <property type="project" value="FlyBase"/>
</dbReference>
<dbReference type="GO" id="GO:0044389">
    <property type="term" value="F:ubiquitin-like protein ligase binding"/>
    <property type="evidence" value="ECO:0000250"/>
    <property type="project" value="FlyBase"/>
</dbReference>
<dbReference type="GO" id="GO:0071569">
    <property type="term" value="P:protein ufmylation"/>
    <property type="evidence" value="ECO:0000315"/>
    <property type="project" value="FlyBase"/>
</dbReference>
<dbReference type="FunFam" id="1.10.10.10:FF:000143">
    <property type="entry name" value="DDRGK domain-containing protein 1"/>
    <property type="match status" value="1"/>
</dbReference>
<dbReference type="Gene3D" id="1.10.10.10">
    <property type="entry name" value="Winged helix-like DNA-binding domain superfamily/Winged helix DNA-binding domain"/>
    <property type="match status" value="1"/>
</dbReference>
<dbReference type="InterPro" id="IPR019153">
    <property type="entry name" value="DDRGK_dom-contain"/>
</dbReference>
<dbReference type="InterPro" id="IPR050899">
    <property type="entry name" value="DDRGK_domain-containing"/>
</dbReference>
<dbReference type="InterPro" id="IPR036388">
    <property type="entry name" value="WH-like_DNA-bd_sf"/>
</dbReference>
<dbReference type="InterPro" id="IPR036390">
    <property type="entry name" value="WH_DNA-bd_sf"/>
</dbReference>
<dbReference type="PANTHER" id="PTHR48176">
    <property type="entry name" value="DDRGK DOMAIN-CONTAINING PROTEIN 1"/>
    <property type="match status" value="1"/>
</dbReference>
<dbReference type="PANTHER" id="PTHR48176:SF1">
    <property type="entry name" value="DDRGK DOMAIN-CONTAINING PROTEIN 1"/>
    <property type="match status" value="1"/>
</dbReference>
<dbReference type="Pfam" id="PF09756">
    <property type="entry name" value="DDRGK"/>
    <property type="match status" value="1"/>
</dbReference>
<dbReference type="SMART" id="SM01128">
    <property type="entry name" value="DDRGK"/>
    <property type="match status" value="1"/>
</dbReference>
<dbReference type="SUPFAM" id="SSF46785">
    <property type="entry name" value="Winged helix' DNA-binding domain"/>
    <property type="match status" value="1"/>
</dbReference>
<sequence>MDLIILVGIAVALLVVIVTLYLLQKKNAAPETKVAAAPQRGVPQRAQEGVPRRAQIARNQRNRLRQNVPAAPVAAAAGALPAAGDSDHEDEGQVDGDEARVPQGAVLDEKMGAKKRAKMEAKEQKRLQREQELHDREQRKVKEAKEEAERKQQEDLEAEAERKRVDAERLAKEERERKEHEEYLKMKAAFSVEEEGFEEGDADDQDNLLADFIQYIRDNKVVVLEDLAVAFKLKTQQVIDRIQNLQADGTLTGVIDDRGKFIYVSEKELLAVAKFIKQRGRVSIAELAESSNNLINLTPISAGGGEASS</sequence>
<evidence type="ECO:0000250" key="1">
    <source>
        <dbReference type="UniProtKB" id="Q96HY6"/>
    </source>
</evidence>
<evidence type="ECO:0000255" key="2"/>
<evidence type="ECO:0000256" key="3">
    <source>
        <dbReference type="SAM" id="MobiDB-lite"/>
    </source>
</evidence>
<evidence type="ECO:0000269" key="4">
    <source>
    </source>
</evidence>
<evidence type="ECO:0000305" key="5"/>
<evidence type="ECO:0000312" key="6">
    <source>
        <dbReference type="FlyBase" id="FBgn0038868"/>
    </source>
</evidence>
<evidence type="ECO:0000312" key="7">
    <source>
        <dbReference type="Proteomes" id="UP000000803"/>
    </source>
</evidence>
<name>DDRGK_DROME</name>
<organism evidence="7">
    <name type="scientific">Drosophila melanogaster</name>
    <name type="common">Fruit fly</name>
    <dbReference type="NCBI Taxonomy" id="7227"/>
    <lineage>
        <taxon>Eukaryota</taxon>
        <taxon>Metazoa</taxon>
        <taxon>Ecdysozoa</taxon>
        <taxon>Arthropoda</taxon>
        <taxon>Hexapoda</taxon>
        <taxon>Insecta</taxon>
        <taxon>Pterygota</taxon>
        <taxon>Neoptera</taxon>
        <taxon>Endopterygota</taxon>
        <taxon>Diptera</taxon>
        <taxon>Brachycera</taxon>
        <taxon>Muscomorpha</taxon>
        <taxon>Ephydroidea</taxon>
        <taxon>Drosophilidae</taxon>
        <taxon>Drosophila</taxon>
        <taxon>Sophophora</taxon>
    </lineage>
</organism>
<proteinExistence type="evidence at protein level"/>
<protein>
    <recommendedName>
        <fullName evidence="6">DDRGK domain-containing protein 1</fullName>
    </recommendedName>
</protein>
<accession>Q9VDD1</accession>